<dbReference type="EC" id="3.1.3.56" evidence="3 4 5"/>
<dbReference type="EMBL" id="X77567">
    <property type="protein sequence ID" value="CAA54676.1"/>
    <property type="molecule type" value="mRNA"/>
</dbReference>
<dbReference type="EMBL" id="AL392043">
    <property type="status" value="NOT_ANNOTATED_CDS"/>
    <property type="molecule type" value="Genomic_DNA"/>
</dbReference>
<dbReference type="EMBL" id="AL451069">
    <property type="status" value="NOT_ANNOTATED_CDS"/>
    <property type="molecule type" value="Genomic_DNA"/>
</dbReference>
<dbReference type="EMBL" id="AL356603">
    <property type="status" value="NOT_ANNOTATED_CDS"/>
    <property type="molecule type" value="Genomic_DNA"/>
</dbReference>
<dbReference type="EMBL" id="CH471211">
    <property type="protein sequence ID" value="EAW61306.1"/>
    <property type="molecule type" value="Genomic_DNA"/>
</dbReference>
<dbReference type="EMBL" id="CH471211">
    <property type="protein sequence ID" value="EAW61307.1"/>
    <property type="molecule type" value="Genomic_DNA"/>
</dbReference>
<dbReference type="EMBL" id="BC096280">
    <property type="protein sequence ID" value="AAH96280.1"/>
    <property type="molecule type" value="mRNA"/>
</dbReference>
<dbReference type="EMBL" id="Z31695">
    <property type="protein sequence ID" value="CAA83500.1"/>
    <property type="molecule type" value="mRNA"/>
</dbReference>
<dbReference type="CCDS" id="CCDS7669.2"/>
<dbReference type="PIR" id="S45721">
    <property type="entry name" value="S45721"/>
</dbReference>
<dbReference type="RefSeq" id="NP_001307971.1">
    <property type="nucleotide sequence ID" value="NM_001321042.1"/>
</dbReference>
<dbReference type="RefSeq" id="NP_005530.3">
    <property type="nucleotide sequence ID" value="NM_005539.4"/>
</dbReference>
<dbReference type="BioGRID" id="109844">
    <property type="interactions" value="35"/>
</dbReference>
<dbReference type="FunCoup" id="Q14642">
    <property type="interactions" value="853"/>
</dbReference>
<dbReference type="IntAct" id="Q14642">
    <property type="interactions" value="26"/>
</dbReference>
<dbReference type="MINT" id="Q14642"/>
<dbReference type="STRING" id="9606.ENSP00000357583"/>
<dbReference type="BindingDB" id="Q14642"/>
<dbReference type="ChEMBL" id="CHEMBL4243"/>
<dbReference type="GuidetoPHARMACOLOGY" id="1453"/>
<dbReference type="SwissLipids" id="SLP:000000952"/>
<dbReference type="DEPOD" id="INPP5A"/>
<dbReference type="iPTMnet" id="Q14642"/>
<dbReference type="PhosphoSitePlus" id="Q14642"/>
<dbReference type="SwissPalm" id="Q14642"/>
<dbReference type="BioMuta" id="INPP5A"/>
<dbReference type="DMDM" id="3122245"/>
<dbReference type="jPOST" id="Q14642"/>
<dbReference type="MassIVE" id="Q14642"/>
<dbReference type="PaxDb" id="9606-ENSP00000357583"/>
<dbReference type="PeptideAtlas" id="Q14642"/>
<dbReference type="ProteomicsDB" id="60080"/>
<dbReference type="Pumba" id="Q14642"/>
<dbReference type="Antibodypedia" id="1413">
    <property type="antibodies" value="155 antibodies from 25 providers"/>
</dbReference>
<dbReference type="DNASU" id="3632"/>
<dbReference type="Ensembl" id="ENST00000368594.8">
    <property type="protein sequence ID" value="ENSP00000357583.3"/>
    <property type="gene ID" value="ENSG00000068383.19"/>
</dbReference>
<dbReference type="GeneID" id="3632"/>
<dbReference type="KEGG" id="hsa:3632"/>
<dbReference type="MANE-Select" id="ENST00000368594.8">
    <property type="protein sequence ID" value="ENSP00000357583.3"/>
    <property type="RefSeq nucleotide sequence ID" value="NM_005539.5"/>
    <property type="RefSeq protein sequence ID" value="NP_005530.3"/>
</dbReference>
<dbReference type="UCSC" id="uc001llp.4">
    <property type="organism name" value="human"/>
</dbReference>
<dbReference type="AGR" id="HGNC:6076"/>
<dbReference type="CTD" id="3632"/>
<dbReference type="DisGeNET" id="3632"/>
<dbReference type="GeneCards" id="INPP5A"/>
<dbReference type="HGNC" id="HGNC:6076">
    <property type="gene designation" value="INPP5A"/>
</dbReference>
<dbReference type="HPA" id="ENSG00000068383">
    <property type="expression patterns" value="Low tissue specificity"/>
</dbReference>
<dbReference type="MIM" id="600106">
    <property type="type" value="gene"/>
</dbReference>
<dbReference type="neXtProt" id="NX_Q14642"/>
<dbReference type="OpenTargets" id="ENSG00000068383"/>
<dbReference type="PharmGKB" id="PA29884"/>
<dbReference type="VEuPathDB" id="HostDB:ENSG00000068383"/>
<dbReference type="eggNOG" id="KOG1976">
    <property type="taxonomic scope" value="Eukaryota"/>
</dbReference>
<dbReference type="GeneTree" id="ENSGT00390000015226"/>
<dbReference type="InParanoid" id="Q14642"/>
<dbReference type="OMA" id="FGMETCT"/>
<dbReference type="OrthoDB" id="5780965at2759"/>
<dbReference type="PAN-GO" id="Q14642">
    <property type="GO annotations" value="3 GO annotations based on evolutionary models"/>
</dbReference>
<dbReference type="PhylomeDB" id="Q14642"/>
<dbReference type="TreeFam" id="TF314246"/>
<dbReference type="BioCyc" id="MetaCyc:HS00936-MONOMER"/>
<dbReference type="BRENDA" id="3.1.3.56">
    <property type="organism ID" value="2681"/>
</dbReference>
<dbReference type="PathwayCommons" id="Q14642"/>
<dbReference type="Reactome" id="R-HSA-1855183">
    <property type="pathway name" value="Synthesis of IP2, IP, and Ins in the cytosol"/>
</dbReference>
<dbReference type="SignaLink" id="Q14642"/>
<dbReference type="BioGRID-ORCS" id="3632">
    <property type="hits" value="20 hits in 1168 CRISPR screens"/>
</dbReference>
<dbReference type="ChiTaRS" id="INPP5A">
    <property type="organism name" value="human"/>
</dbReference>
<dbReference type="GeneWiki" id="INPP5A"/>
<dbReference type="GenomeRNAi" id="3632"/>
<dbReference type="Pharos" id="Q14642">
    <property type="development level" value="Tchem"/>
</dbReference>
<dbReference type="PRO" id="PR:Q14642"/>
<dbReference type="Proteomes" id="UP000005640">
    <property type="component" value="Chromosome 10"/>
</dbReference>
<dbReference type="RNAct" id="Q14642">
    <property type="molecule type" value="protein"/>
</dbReference>
<dbReference type="Bgee" id="ENSG00000068383">
    <property type="expression patterns" value="Expressed in lateral nuclear group of thalamus and 212 other cell types or tissues"/>
</dbReference>
<dbReference type="ExpressionAtlas" id="Q14642">
    <property type="expression patterns" value="baseline and differential"/>
</dbReference>
<dbReference type="GO" id="GO:0030425">
    <property type="term" value="C:dendrite"/>
    <property type="evidence" value="ECO:0000250"/>
    <property type="project" value="UniProtKB"/>
</dbReference>
<dbReference type="GO" id="GO:0016020">
    <property type="term" value="C:membrane"/>
    <property type="evidence" value="ECO:0000314"/>
    <property type="project" value="MGI"/>
</dbReference>
<dbReference type="GO" id="GO:0005886">
    <property type="term" value="C:plasma membrane"/>
    <property type="evidence" value="ECO:0000314"/>
    <property type="project" value="UniProtKB"/>
</dbReference>
<dbReference type="GO" id="GO:0052659">
    <property type="term" value="F:inositol-1,3,4,5-tetrakisphosphate 5-phosphatase activity"/>
    <property type="evidence" value="ECO:0007669"/>
    <property type="project" value="RHEA"/>
</dbReference>
<dbReference type="GO" id="GO:0052658">
    <property type="term" value="F:inositol-1,4,5-trisphosphate 5-phosphatase activity"/>
    <property type="evidence" value="ECO:0000304"/>
    <property type="project" value="Reactome"/>
</dbReference>
<dbReference type="GO" id="GO:0004445">
    <property type="term" value="F:inositol-polyphosphate 5-phosphatase activity"/>
    <property type="evidence" value="ECO:0000314"/>
    <property type="project" value="UniProtKB"/>
</dbReference>
<dbReference type="GO" id="GO:0042731">
    <property type="term" value="F:PH domain binding"/>
    <property type="evidence" value="ECO:0000353"/>
    <property type="project" value="BHF-UCL"/>
</dbReference>
<dbReference type="GO" id="GO:0043647">
    <property type="term" value="P:inositol phosphate metabolic process"/>
    <property type="evidence" value="ECO:0000304"/>
    <property type="project" value="Reactome"/>
</dbReference>
<dbReference type="GO" id="GO:1900737">
    <property type="term" value="P:negative regulation of phospholipase C-activating G protein-coupled receptor signaling pathway"/>
    <property type="evidence" value="ECO:0000250"/>
    <property type="project" value="UniProtKB"/>
</dbReference>
<dbReference type="GO" id="GO:0046856">
    <property type="term" value="P:phosphatidylinositol dephosphorylation"/>
    <property type="evidence" value="ECO:0007669"/>
    <property type="project" value="InterPro"/>
</dbReference>
<dbReference type="CDD" id="cd09092">
    <property type="entry name" value="INPP5A"/>
    <property type="match status" value="1"/>
</dbReference>
<dbReference type="Gene3D" id="3.60.10.10">
    <property type="entry name" value="Endonuclease/exonuclease/phosphatase"/>
    <property type="match status" value="1"/>
</dbReference>
<dbReference type="InterPro" id="IPR036691">
    <property type="entry name" value="Endo/exonu/phosph_ase_sf"/>
</dbReference>
<dbReference type="InterPro" id="IPR039737">
    <property type="entry name" value="INPP5A"/>
</dbReference>
<dbReference type="InterPro" id="IPR000300">
    <property type="entry name" value="IPPc"/>
</dbReference>
<dbReference type="PANTHER" id="PTHR12997:SF2">
    <property type="entry name" value="INOSITOL POLYPHOSPHATE-5-PHOSPHATASE A"/>
    <property type="match status" value="1"/>
</dbReference>
<dbReference type="PANTHER" id="PTHR12997">
    <property type="entry name" value="TYPE I INOSITOL-1,4,5-TRISPHOSPHATE 5-PHOSPHATASE"/>
    <property type="match status" value="1"/>
</dbReference>
<dbReference type="Pfam" id="PF22669">
    <property type="entry name" value="Exo_endo_phos2"/>
    <property type="match status" value="1"/>
</dbReference>
<dbReference type="SMART" id="SM00128">
    <property type="entry name" value="IPPc"/>
    <property type="match status" value="1"/>
</dbReference>
<dbReference type="SUPFAM" id="SSF56219">
    <property type="entry name" value="DNase I-like"/>
    <property type="match status" value="1"/>
</dbReference>
<feature type="chain" id="PRO_0000209719" description="Inositol polyphosphate-5-phosphatase A">
    <location>
        <begin position="1"/>
        <end position="409"/>
    </location>
</feature>
<feature type="propeptide" id="PRO_0000396780" description="Removed in mature form" evidence="4">
    <location>
        <begin position="410"/>
        <end position="412"/>
    </location>
</feature>
<feature type="lipid moiety-binding region" description="S-farnesyl cysteine" evidence="4">
    <location>
        <position position="409"/>
    </location>
</feature>
<feature type="sequence variant" id="VAR_034006" description="In dbSNP:rs1133400.">
    <original>K</original>
    <variation>R</variation>
    <location>
        <position position="45"/>
    </location>
</feature>
<feature type="mutagenesis site" description="Loss of membrane localization. No loss of enzyme activity." evidence="4">
    <location>
        <begin position="408"/>
        <end position="412"/>
    </location>
</feature>
<feature type="mutagenesis site" description="Loss of prenylation and membrane localization. No loss of enzyme activity." evidence="4">
    <original>C</original>
    <variation>S</variation>
    <location>
        <position position="409"/>
    </location>
</feature>
<feature type="sequence conflict" description="In Ref. 5; CAA83500." evidence="8" ref="5">
    <original>PQDYFPECKWSRKGFIRTRWC</original>
    <variation>RRLLPRVQMVKKRLHPDEVV</variation>
    <location>
        <begin position="152"/>
        <end position="172"/>
    </location>
</feature>
<feature type="sequence conflict" description="In Ref. 5; CAA83500." evidence="8" ref="5">
    <original>CTKAT</original>
    <variation>SAKPP</variation>
    <location>
        <begin position="247"/>
        <end position="251"/>
    </location>
</feature>
<sequence>MAGKAAAPGTAVLLVTANVGSLFDDPENLQKNWLREFYQVVHTHKPHFMALHCQEFGGKNYEASMSHVDKFVKELLSSDAMKEYNRARVYLDENYKSQEHFTALGSFYFLHESLKNIYQFDFKAKKYRKVAGKEIYSDTLESTPMLEKEKFPQDYFPECKWSRKGFIRTRWCIADCAFDLVNIHLFHDASNLVAWETSPSVYSGIRHKALGYVLDRIIDQRFEKVSYFVFGDFNFRLDSKSVVETLCTKATMQTVRAADTNEVVKLIFRESDNDRKVMLQLEKKLFDYFNQEVFRDNNGTALLEFDKELSVFKDRLYELDISFPPSYPYSEDARQGEQYMNTRCPAWCDRILMSPSAKELVLRSESEEKVVTYDHIGPNVCMGDHKPVFLAFRIMPGAGKPHAHVHKCCVVQ</sequence>
<gene>
    <name evidence="11" type="primary">INPP5A</name>
    <name evidence="7" type="synonym">5PTASE</name>
</gene>
<reference key="1">
    <citation type="journal article" date="1994" name="FEBS Lett.">
        <title>Cloning and expression of human brain type I inositol 1,4,5-trisphosphate 5-phosphatase. High levels of mRNA in cerebellar Purkinje cells.</title>
        <authorList>
            <person name="de Smedt F."/>
            <person name="Verjans B."/>
            <person name="Mailleux P."/>
            <person name="Erneux C."/>
        </authorList>
    </citation>
    <scope>NUCLEOTIDE SEQUENCE [MRNA]</scope>
    <scope>FUNCTION</scope>
    <scope>TISSUE SPECIFICITY</scope>
    <scope>CATALYTIC ACTIVITY</scope>
    <source>
        <tissue>Brain</tissue>
    </source>
</reference>
<reference key="2">
    <citation type="journal article" date="2004" name="Nature">
        <title>The DNA sequence and comparative analysis of human chromosome 10.</title>
        <authorList>
            <person name="Deloukas P."/>
            <person name="Earthrowl M.E."/>
            <person name="Grafham D.V."/>
            <person name="Rubenfield M."/>
            <person name="French L."/>
            <person name="Steward C.A."/>
            <person name="Sims S.K."/>
            <person name="Jones M.C."/>
            <person name="Searle S."/>
            <person name="Scott C."/>
            <person name="Howe K."/>
            <person name="Hunt S.E."/>
            <person name="Andrews T.D."/>
            <person name="Gilbert J.G.R."/>
            <person name="Swarbreck D."/>
            <person name="Ashurst J.L."/>
            <person name="Taylor A."/>
            <person name="Battles J."/>
            <person name="Bird C.P."/>
            <person name="Ainscough R."/>
            <person name="Almeida J.P."/>
            <person name="Ashwell R.I.S."/>
            <person name="Ambrose K.D."/>
            <person name="Babbage A.K."/>
            <person name="Bagguley C.L."/>
            <person name="Bailey J."/>
            <person name="Banerjee R."/>
            <person name="Bates K."/>
            <person name="Beasley H."/>
            <person name="Bray-Allen S."/>
            <person name="Brown A.J."/>
            <person name="Brown J.Y."/>
            <person name="Burford D.C."/>
            <person name="Burrill W."/>
            <person name="Burton J."/>
            <person name="Cahill P."/>
            <person name="Camire D."/>
            <person name="Carter N.P."/>
            <person name="Chapman J.C."/>
            <person name="Clark S.Y."/>
            <person name="Clarke G."/>
            <person name="Clee C.M."/>
            <person name="Clegg S."/>
            <person name="Corby N."/>
            <person name="Coulson A."/>
            <person name="Dhami P."/>
            <person name="Dutta I."/>
            <person name="Dunn M."/>
            <person name="Faulkner L."/>
            <person name="Frankish A."/>
            <person name="Frankland J.A."/>
            <person name="Garner P."/>
            <person name="Garnett J."/>
            <person name="Gribble S."/>
            <person name="Griffiths C."/>
            <person name="Grocock R."/>
            <person name="Gustafson E."/>
            <person name="Hammond S."/>
            <person name="Harley J.L."/>
            <person name="Hart E."/>
            <person name="Heath P.D."/>
            <person name="Ho T.P."/>
            <person name="Hopkins B."/>
            <person name="Horne J."/>
            <person name="Howden P.J."/>
            <person name="Huckle E."/>
            <person name="Hynds C."/>
            <person name="Johnson C."/>
            <person name="Johnson D."/>
            <person name="Kana A."/>
            <person name="Kay M."/>
            <person name="Kimberley A.M."/>
            <person name="Kershaw J.K."/>
            <person name="Kokkinaki M."/>
            <person name="Laird G.K."/>
            <person name="Lawlor S."/>
            <person name="Lee H.M."/>
            <person name="Leongamornlert D.A."/>
            <person name="Laird G."/>
            <person name="Lloyd C."/>
            <person name="Lloyd D.M."/>
            <person name="Loveland J."/>
            <person name="Lovell J."/>
            <person name="McLaren S."/>
            <person name="McLay K.E."/>
            <person name="McMurray A."/>
            <person name="Mashreghi-Mohammadi M."/>
            <person name="Matthews L."/>
            <person name="Milne S."/>
            <person name="Nickerson T."/>
            <person name="Nguyen M."/>
            <person name="Overton-Larty E."/>
            <person name="Palmer S.A."/>
            <person name="Pearce A.V."/>
            <person name="Peck A.I."/>
            <person name="Pelan S."/>
            <person name="Phillimore B."/>
            <person name="Porter K."/>
            <person name="Rice C.M."/>
            <person name="Rogosin A."/>
            <person name="Ross M.T."/>
            <person name="Sarafidou T."/>
            <person name="Sehra H.K."/>
            <person name="Shownkeen R."/>
            <person name="Skuce C.D."/>
            <person name="Smith M."/>
            <person name="Standring L."/>
            <person name="Sycamore N."/>
            <person name="Tester J."/>
            <person name="Thorpe A."/>
            <person name="Torcasso W."/>
            <person name="Tracey A."/>
            <person name="Tromans A."/>
            <person name="Tsolas J."/>
            <person name="Wall M."/>
            <person name="Walsh J."/>
            <person name="Wang H."/>
            <person name="Weinstock K."/>
            <person name="West A.P."/>
            <person name="Willey D.L."/>
            <person name="Whitehead S.L."/>
            <person name="Wilming L."/>
            <person name="Wray P.W."/>
            <person name="Young L."/>
            <person name="Chen Y."/>
            <person name="Lovering R.C."/>
            <person name="Moschonas N.K."/>
            <person name="Siebert R."/>
            <person name="Fechtel K."/>
            <person name="Bentley D."/>
            <person name="Durbin R.M."/>
            <person name="Hubbard T."/>
            <person name="Doucette-Stamm L."/>
            <person name="Beck S."/>
            <person name="Smith D.R."/>
            <person name="Rogers J."/>
        </authorList>
    </citation>
    <scope>NUCLEOTIDE SEQUENCE [LARGE SCALE GENOMIC DNA]</scope>
</reference>
<reference key="3">
    <citation type="submission" date="2005-09" db="EMBL/GenBank/DDBJ databases">
        <authorList>
            <person name="Mural R.J."/>
            <person name="Istrail S."/>
            <person name="Sutton G.G."/>
            <person name="Florea L."/>
            <person name="Halpern A.L."/>
            <person name="Mobarry C.M."/>
            <person name="Lippert R."/>
            <person name="Walenz B."/>
            <person name="Shatkay H."/>
            <person name="Dew I."/>
            <person name="Miller J.R."/>
            <person name="Flanigan M.J."/>
            <person name="Edwards N.J."/>
            <person name="Bolanos R."/>
            <person name="Fasulo D."/>
            <person name="Halldorsson B.V."/>
            <person name="Hannenhalli S."/>
            <person name="Turner R."/>
            <person name="Yooseph S."/>
            <person name="Lu F."/>
            <person name="Nusskern D.R."/>
            <person name="Shue B.C."/>
            <person name="Zheng X.H."/>
            <person name="Zhong F."/>
            <person name="Delcher A.L."/>
            <person name="Huson D.H."/>
            <person name="Kravitz S.A."/>
            <person name="Mouchard L."/>
            <person name="Reinert K."/>
            <person name="Remington K.A."/>
            <person name="Clark A.G."/>
            <person name="Waterman M.S."/>
            <person name="Eichler E.E."/>
            <person name="Adams M.D."/>
            <person name="Hunkapiller M.W."/>
            <person name="Myers E.W."/>
            <person name="Venter J.C."/>
        </authorList>
    </citation>
    <scope>NUCLEOTIDE SEQUENCE [LARGE SCALE GENOMIC DNA]</scope>
</reference>
<reference key="4">
    <citation type="journal article" date="2004" name="Genome Res.">
        <title>The status, quality, and expansion of the NIH full-length cDNA project: the Mammalian Gene Collection (MGC).</title>
        <authorList>
            <consortium name="The MGC Project Team"/>
        </authorList>
    </citation>
    <scope>NUCLEOTIDE SEQUENCE [LARGE SCALE MRNA]</scope>
</reference>
<reference key="5">
    <citation type="journal article" date="1994" name="J. Biol. Chem.">
        <title>Characterization of a cDNA encoding the 43-kDa membrane-associated inositol-polyphosphate 5-phosphatase.</title>
        <authorList>
            <person name="Laxminarayan K.M."/>
            <person name="Chan B.K."/>
            <person name="Tetaz T."/>
            <person name="Bird P.I."/>
            <person name="Mitchell C.A."/>
        </authorList>
    </citation>
    <scope>NUCLEOTIDE SEQUENCE [MRNA] OF 49-412</scope>
    <scope>TISSUE SPECIFICITY</scope>
    <scope>SUBCELLULAR LOCATION</scope>
    <source>
        <tissue>Placenta</tissue>
    </source>
</reference>
<reference key="6">
    <citation type="journal article" date="1996" name="Biochem. Biophys. Res. Commun.">
        <title>Cloning and expression of a human placenta inositol 1,3,4,5-tetrakisphosphate and phosphatidylinositol 3,4,5-trisphosphate 5-phosphatase.</title>
        <authorList>
            <person name="Drayer A.L."/>
            <person name="Pesesse X."/>
            <person name="De Smedt F."/>
            <person name="Woscholski R."/>
            <person name="Parker P."/>
            <person name="Erneux C."/>
        </authorList>
    </citation>
    <scope>CATALYTIC ACTIVITY</scope>
    <scope>FUNCTION</scope>
</reference>
<reference key="7">
    <citation type="journal article" date="1996" name="J. Biol. Chem.">
        <title>Post-translational modification of human brain type I inositol-1,4,5-trisphosphate 5-phosphatase by farnesylation.</title>
        <authorList>
            <person name="De Smedt F."/>
            <person name="Boom A."/>
            <person name="Pesesse X."/>
            <person name="Schiffmann S.N."/>
            <person name="Erneux C."/>
        </authorList>
    </citation>
    <scope>FUNCTION</scope>
    <scope>CATALYTIC ACTIVITY</scope>
    <scope>SUBCELLULAR LOCATION</scope>
    <scope>ISOPRENYLATION AT CYS-409</scope>
    <scope>MUTAGENESIS OF 408-CYS--GLN-412 AND CYS-409</scope>
</reference>
<accession>Q14642</accession>
<accession>D3DXI3</accession>
<accession>Q14640</accession>
<accession>Q5JSF1</accession>
<protein>
    <recommendedName>
        <fullName>Inositol polyphosphate-5-phosphatase A</fullName>
        <ecNumber evidence="3 4 5">3.1.3.56</ecNumber>
    </recommendedName>
    <alternativeName>
        <fullName evidence="6">43 kDa inositol polyphosphate 5-phosphatase</fullName>
    </alternativeName>
    <alternativeName>
        <fullName evidence="7">Type I inositol 1,4,5-trisphosphate 5-phosphatase</fullName>
        <shortName evidence="7">5PTase</shortName>
    </alternativeName>
</protein>
<evidence type="ECO:0000250" key="1">
    <source>
        <dbReference type="UniProtKB" id="Q7TNC9"/>
    </source>
</evidence>
<evidence type="ECO:0000269" key="2">
    <source>
    </source>
</evidence>
<evidence type="ECO:0000269" key="3">
    <source>
    </source>
</evidence>
<evidence type="ECO:0000269" key="4">
    <source>
    </source>
</evidence>
<evidence type="ECO:0000269" key="5">
    <source>
    </source>
</evidence>
<evidence type="ECO:0000303" key="6">
    <source>
    </source>
</evidence>
<evidence type="ECO:0000303" key="7">
    <source>
    </source>
</evidence>
<evidence type="ECO:0000305" key="8"/>
<evidence type="ECO:0000305" key="9">
    <source>
    </source>
</evidence>
<evidence type="ECO:0000305" key="10">
    <source>
    </source>
</evidence>
<evidence type="ECO:0000312" key="11">
    <source>
        <dbReference type="HGNC" id="HGNC:6076"/>
    </source>
</evidence>
<proteinExistence type="evidence at protein level"/>
<name>I5P1_HUMAN</name>
<keyword id="KW-1003">Cell membrane</keyword>
<keyword id="KW-0966">Cell projection</keyword>
<keyword id="KW-0378">Hydrolase</keyword>
<keyword id="KW-0449">Lipoprotein</keyword>
<keyword id="KW-0472">Membrane</keyword>
<keyword id="KW-0636">Prenylation</keyword>
<keyword id="KW-1267">Proteomics identification</keyword>
<keyword id="KW-1185">Reference proteome</keyword>
<organism>
    <name type="scientific">Homo sapiens</name>
    <name type="common">Human</name>
    <dbReference type="NCBI Taxonomy" id="9606"/>
    <lineage>
        <taxon>Eukaryota</taxon>
        <taxon>Metazoa</taxon>
        <taxon>Chordata</taxon>
        <taxon>Craniata</taxon>
        <taxon>Vertebrata</taxon>
        <taxon>Euteleostomi</taxon>
        <taxon>Mammalia</taxon>
        <taxon>Eutheria</taxon>
        <taxon>Euarchontoglires</taxon>
        <taxon>Primates</taxon>
        <taxon>Haplorrhini</taxon>
        <taxon>Catarrhini</taxon>
        <taxon>Hominidae</taxon>
        <taxon>Homo</taxon>
    </lineage>
</organism>
<comment type="function">
    <text evidence="1 3 4 5">Phosphatase that specifically hydrolyzes the 5-phosphate of inositol 1,4,5-trisphosphate to inositol 1,4-bisphosphate, and inositol 1,3,4,5-tetrasphosphate to inositol 1,3,4-trisphosphate (PubMed:8013665, PubMed:8626616, PubMed:8769125). Plays a crucial role in the survival of cerebellar Purkinje cells (By similarity).</text>
</comment>
<comment type="catalytic activity">
    <reaction evidence="3 4 5">
        <text>1D-myo-inositol 1,4,5-trisphosphate + H2O = 1D-myo-inositol 1,4-bisphosphate + phosphate</text>
        <dbReference type="Rhea" id="RHEA:19797"/>
        <dbReference type="ChEBI" id="CHEBI:15377"/>
        <dbReference type="ChEBI" id="CHEBI:43474"/>
        <dbReference type="ChEBI" id="CHEBI:58282"/>
        <dbReference type="ChEBI" id="CHEBI:203600"/>
        <dbReference type="EC" id="3.1.3.56"/>
    </reaction>
    <physiologicalReaction direction="left-to-right" evidence="10">
        <dbReference type="Rhea" id="RHEA:19798"/>
    </physiologicalReaction>
</comment>
<comment type="catalytic activity">
    <reaction evidence="4 5">
        <text>1D-myo-inositol 1,3,4,5-tetrakisphosphate + H2O = 1D-myo-inositol 1,3,4-trisphosphate + phosphate</text>
        <dbReference type="Rhea" id="RHEA:11392"/>
        <dbReference type="ChEBI" id="CHEBI:15377"/>
        <dbReference type="ChEBI" id="CHEBI:43474"/>
        <dbReference type="ChEBI" id="CHEBI:57895"/>
        <dbReference type="ChEBI" id="CHEBI:58414"/>
        <dbReference type="EC" id="3.1.3.56"/>
    </reaction>
    <physiologicalReaction direction="left-to-right" evidence="10">
        <dbReference type="Rhea" id="RHEA:11393"/>
    </physiologicalReaction>
</comment>
<comment type="subunit">
    <text evidence="1">Interacts with TASOR.</text>
</comment>
<comment type="interaction">
    <interactant intactId="EBI-8670520">
        <id>Q14642</id>
    </interactant>
    <interactant intactId="EBI-2565501">
        <id>P08567</id>
        <label>PLEK</label>
    </interactant>
    <organismsDiffer>false</organismsDiffer>
    <experiments>4</experiments>
</comment>
<comment type="interaction">
    <interactant intactId="EBI-8670520">
        <id>Q14642</id>
    </interactant>
    <interactant intactId="EBI-9370956">
        <id>Q15562-2</id>
        <label>TEAD2</label>
    </interactant>
    <organismsDiffer>false</organismsDiffer>
    <experiments>3</experiments>
</comment>
<comment type="interaction">
    <interactant intactId="EBI-8670520">
        <id>Q14642</id>
    </interactant>
    <interactant intactId="EBI-711909">
        <id>P02766</id>
        <label>TTR</label>
    </interactant>
    <organismsDiffer>false</organismsDiffer>
    <experiments>2</experiments>
</comment>
<comment type="subcellular location">
    <subcellularLocation>
        <location evidence="4 9">Cell membrane</location>
        <topology evidence="4 8">Lipid-anchor</topology>
    </subcellularLocation>
    <subcellularLocation>
        <location evidence="1">Cell projection</location>
        <location evidence="1">Dendrite</location>
    </subcellularLocation>
</comment>
<comment type="tissue specificity">
    <text evidence="2 3">Predominantly expressed in heart, brain, and skeletal muscle (PubMed:8006039). In brain; high level in Purkinje cells (PubMed:8013665).</text>
</comment>
<comment type="PTM">
    <text evidence="4">Isoprenylation at Cys-409 is required for localization at the membrane.</text>
</comment>
<comment type="similarity">
    <text evidence="8">Belongs to the inositol 1,4,5-trisphosphate 5-phosphatase type I family.</text>
</comment>